<comment type="function">
    <text evidence="1">Catalyzes the isomerization between 2-isopropylmalate and 3-isopropylmalate, via the formation of 2-isopropylmaleate.</text>
</comment>
<comment type="catalytic activity">
    <reaction>
        <text>(2R,3S)-3-isopropylmalate = (2S)-2-isopropylmalate</text>
        <dbReference type="Rhea" id="RHEA:32287"/>
        <dbReference type="ChEBI" id="CHEBI:1178"/>
        <dbReference type="ChEBI" id="CHEBI:35121"/>
        <dbReference type="EC" id="4.2.1.33"/>
    </reaction>
</comment>
<comment type="pathway">
    <text>Amino-acid biosynthesis; L-leucine biosynthesis; L-leucine from 3-methyl-2-oxobutanoate: step 2/4.</text>
</comment>
<comment type="subunit">
    <text>Heterodimer of LeuC and LeuD.</text>
</comment>
<comment type="similarity">
    <text evidence="2">Belongs to the LeuD family. LeuD type 1 subfamily.</text>
</comment>
<gene>
    <name type="primary">leuD</name>
</gene>
<organism>
    <name type="scientific">Buchnera aphidicola subsp. Rhopalosiphum padi</name>
    <dbReference type="NCBI Taxonomy" id="98793"/>
    <lineage>
        <taxon>Bacteria</taxon>
        <taxon>Pseudomonadati</taxon>
        <taxon>Pseudomonadota</taxon>
        <taxon>Gammaproteobacteria</taxon>
        <taxon>Enterobacterales</taxon>
        <taxon>Erwiniaceae</taxon>
        <taxon>Buchnera</taxon>
    </lineage>
</organism>
<evidence type="ECO:0000250" key="1"/>
<evidence type="ECO:0000305" key="2"/>
<protein>
    <recommendedName>
        <fullName>3-isopropylmalate dehydratase small subunit</fullName>
        <ecNumber>4.2.1.33</ecNumber>
    </recommendedName>
    <alternativeName>
        <fullName>Alpha-IPM isomerase</fullName>
        <shortName>IPMI</shortName>
    </alternativeName>
    <alternativeName>
        <fullName>Isopropylmalate isomerase</fullName>
    </alternativeName>
</protein>
<feature type="chain" id="PRO_0000141802" description="3-isopropylmalate dehydratase small subunit">
    <location>
        <begin position="1"/>
        <end position="207"/>
    </location>
</feature>
<name>LEUD_BUCRP</name>
<accession>P48574</accession>
<sequence length="207" mass="24116">MFKFTEHNGVVAPLNISNIDTDAIIPKQFLQKVNKIGFGKYLFHDWRFIDKNQLKINPNFILNNYVYKNASILLTRENFGCGSSREHAVWSLLDYGFKVIISSSFSDIFFNNSFNNKLLLVVLEKKHIDYLFNLVDTKIGISFNVSLINKKITAGDLDIPFQIDDFQRLCLLNNWDNIDLTMKINHKIKSYEDNISSFLLERQEFTS</sequence>
<keyword id="KW-0028">Amino-acid biosynthesis</keyword>
<keyword id="KW-0100">Branched-chain amino acid biosynthesis</keyword>
<keyword id="KW-0432">Leucine biosynthesis</keyword>
<keyword id="KW-0456">Lyase</keyword>
<keyword id="KW-0614">Plasmid</keyword>
<proteinExistence type="inferred from homology"/>
<dbReference type="EC" id="4.2.1.33"/>
<dbReference type="EMBL" id="X71612">
    <property type="protein sequence ID" value="CAA50618.1"/>
    <property type="molecule type" value="Genomic_DNA"/>
</dbReference>
<dbReference type="SMR" id="P48574"/>
<dbReference type="UniPathway" id="UPA00048">
    <property type="reaction ID" value="UER00071"/>
</dbReference>
<dbReference type="GO" id="GO:0009316">
    <property type="term" value="C:3-isopropylmalate dehydratase complex"/>
    <property type="evidence" value="ECO:0007669"/>
    <property type="project" value="InterPro"/>
</dbReference>
<dbReference type="GO" id="GO:0003861">
    <property type="term" value="F:3-isopropylmalate dehydratase activity"/>
    <property type="evidence" value="ECO:0007669"/>
    <property type="project" value="UniProtKB-UniRule"/>
</dbReference>
<dbReference type="GO" id="GO:0009098">
    <property type="term" value="P:L-leucine biosynthetic process"/>
    <property type="evidence" value="ECO:0007669"/>
    <property type="project" value="UniProtKB-UniRule"/>
</dbReference>
<dbReference type="CDD" id="cd01577">
    <property type="entry name" value="IPMI_Swivel"/>
    <property type="match status" value="1"/>
</dbReference>
<dbReference type="FunFam" id="3.20.19.10:FF:000003">
    <property type="entry name" value="3-isopropylmalate dehydratase small subunit"/>
    <property type="match status" value="1"/>
</dbReference>
<dbReference type="Gene3D" id="3.20.19.10">
    <property type="entry name" value="Aconitase, domain 4"/>
    <property type="match status" value="1"/>
</dbReference>
<dbReference type="HAMAP" id="MF_01031">
    <property type="entry name" value="LeuD_type1"/>
    <property type="match status" value="1"/>
</dbReference>
<dbReference type="InterPro" id="IPR004431">
    <property type="entry name" value="3-IsopropMal_deHydase_ssu"/>
</dbReference>
<dbReference type="InterPro" id="IPR015928">
    <property type="entry name" value="Aconitase/3IPM_dehydase_swvl"/>
</dbReference>
<dbReference type="InterPro" id="IPR000573">
    <property type="entry name" value="AconitaseA/IPMdHydase_ssu_swvl"/>
</dbReference>
<dbReference type="InterPro" id="IPR033940">
    <property type="entry name" value="IPMI_Swivel"/>
</dbReference>
<dbReference type="InterPro" id="IPR050075">
    <property type="entry name" value="LeuD"/>
</dbReference>
<dbReference type="NCBIfam" id="TIGR00171">
    <property type="entry name" value="leuD"/>
    <property type="match status" value="1"/>
</dbReference>
<dbReference type="NCBIfam" id="NF002458">
    <property type="entry name" value="PRK01641.1"/>
    <property type="match status" value="1"/>
</dbReference>
<dbReference type="PANTHER" id="PTHR43345:SF5">
    <property type="entry name" value="3-ISOPROPYLMALATE DEHYDRATASE SMALL SUBUNIT"/>
    <property type="match status" value="1"/>
</dbReference>
<dbReference type="PANTHER" id="PTHR43345">
    <property type="entry name" value="3-ISOPROPYLMALATE DEHYDRATASE SMALL SUBUNIT 2-RELATED-RELATED"/>
    <property type="match status" value="1"/>
</dbReference>
<dbReference type="Pfam" id="PF00694">
    <property type="entry name" value="Aconitase_C"/>
    <property type="match status" value="1"/>
</dbReference>
<dbReference type="SUPFAM" id="SSF52016">
    <property type="entry name" value="LeuD/IlvD-like"/>
    <property type="match status" value="1"/>
</dbReference>
<geneLocation type="plasmid">
    <name>pRPE</name>
</geneLocation>
<reference key="1">
    <citation type="journal article" date="1995" name="J. Mol. Evol.">
        <title>Discovery and molecular characterization of a plasmid localized in Buchnera sp. bacterial endosymbiont of the aphid Rhopalosiphum padi.</title>
        <authorList>
            <person name="Bracho A.M."/>
            <person name="Martinez-Torres D."/>
            <person name="Moya A."/>
            <person name="Latorre A."/>
        </authorList>
    </citation>
    <scope>NUCLEOTIDE SEQUENCE [GENOMIC DNA]</scope>
</reference>